<gene>
    <name type="primary">WNT-4</name>
</gene>
<accession>P28135</accession>
<dbReference type="EMBL" id="M91292">
    <property type="protein sequence ID" value="AAA49460.1"/>
    <property type="molecule type" value="Genomic_DNA"/>
</dbReference>
<dbReference type="SMR" id="P28135"/>
<dbReference type="GlyCosmos" id="P28135">
    <property type="glycosylation" value="1 site, No reported glycans"/>
</dbReference>
<dbReference type="GO" id="GO:0005615">
    <property type="term" value="C:extracellular space"/>
    <property type="evidence" value="ECO:0007669"/>
    <property type="project" value="TreeGrafter"/>
</dbReference>
<dbReference type="GO" id="GO:0005125">
    <property type="term" value="F:cytokine activity"/>
    <property type="evidence" value="ECO:0007669"/>
    <property type="project" value="TreeGrafter"/>
</dbReference>
<dbReference type="GO" id="GO:0005109">
    <property type="term" value="F:frizzled binding"/>
    <property type="evidence" value="ECO:0007669"/>
    <property type="project" value="TreeGrafter"/>
</dbReference>
<dbReference type="GO" id="GO:0060070">
    <property type="term" value="P:canonical Wnt signaling pathway"/>
    <property type="evidence" value="ECO:0007669"/>
    <property type="project" value="TreeGrafter"/>
</dbReference>
<dbReference type="GO" id="GO:0045165">
    <property type="term" value="P:cell fate commitment"/>
    <property type="evidence" value="ECO:0007669"/>
    <property type="project" value="TreeGrafter"/>
</dbReference>
<dbReference type="GO" id="GO:0030182">
    <property type="term" value="P:neuron differentiation"/>
    <property type="evidence" value="ECO:0007669"/>
    <property type="project" value="TreeGrafter"/>
</dbReference>
<dbReference type="FunFam" id="3.30.2460.20:FF:000008">
    <property type="entry name" value="Protein Wnt-4"/>
    <property type="match status" value="1"/>
</dbReference>
<dbReference type="Gene3D" id="3.30.2460.20">
    <property type="match status" value="1"/>
</dbReference>
<dbReference type="InterPro" id="IPR005817">
    <property type="entry name" value="Wnt"/>
</dbReference>
<dbReference type="InterPro" id="IPR043158">
    <property type="entry name" value="Wnt_C"/>
</dbReference>
<dbReference type="PANTHER" id="PTHR12027:SF101">
    <property type="entry name" value="PROTEIN WNT-4"/>
    <property type="match status" value="1"/>
</dbReference>
<dbReference type="PANTHER" id="PTHR12027">
    <property type="entry name" value="WNT RELATED"/>
    <property type="match status" value="1"/>
</dbReference>
<dbReference type="Pfam" id="PF00110">
    <property type="entry name" value="wnt"/>
    <property type="match status" value="1"/>
</dbReference>
<dbReference type="SMART" id="SM00097">
    <property type="entry name" value="WNT1"/>
    <property type="match status" value="1"/>
</dbReference>
<organism>
    <name type="scientific">Plethodon jordani</name>
    <name type="common">Red-cheeked salamander</name>
    <dbReference type="NCBI Taxonomy" id="8336"/>
    <lineage>
        <taxon>Eukaryota</taxon>
        <taxon>Metazoa</taxon>
        <taxon>Chordata</taxon>
        <taxon>Craniata</taxon>
        <taxon>Vertebrata</taxon>
        <taxon>Euteleostomi</taxon>
        <taxon>Amphibia</taxon>
        <taxon>Batrachia</taxon>
        <taxon>Caudata</taxon>
        <taxon>Salamandroidea</taxon>
        <taxon>Plethodontidae</taxon>
        <taxon>Plethodontinae</taxon>
        <taxon>Plethodon</taxon>
    </lineage>
</organism>
<keyword id="KW-0217">Developmental protein</keyword>
<keyword id="KW-1015">Disulfide bond</keyword>
<keyword id="KW-0272">Extracellular matrix</keyword>
<keyword id="KW-0325">Glycoprotein</keyword>
<keyword id="KW-0449">Lipoprotein</keyword>
<keyword id="KW-0964">Secreted</keyword>
<keyword id="KW-0879">Wnt signaling pathway</keyword>
<sequence length="119" mass="13162">SGSCEVKTCWKAMPPFRKVGNVLKEKFDGATEVEQKKIGSAKVLVPKNSQFKPHTDEDLVYLDSSPDFCDHDLKNGVLGTAGRQCNKTSKAIDGCELMCCGRGFHTEEVEIVERCSCKF</sequence>
<protein>
    <recommendedName>
        <fullName>Protein Wnt-4</fullName>
    </recommendedName>
</protein>
<proteinExistence type="inferred from homology"/>
<evidence type="ECO:0000250" key="1">
    <source>
        <dbReference type="UniProtKB" id="P22724"/>
    </source>
</evidence>
<evidence type="ECO:0000250" key="2">
    <source>
        <dbReference type="UniProtKB" id="P27467"/>
    </source>
</evidence>
<evidence type="ECO:0000250" key="3">
    <source>
        <dbReference type="UniProtKB" id="P28026"/>
    </source>
</evidence>
<evidence type="ECO:0000250" key="4">
    <source>
        <dbReference type="UniProtKB" id="P56704"/>
    </source>
</evidence>
<evidence type="ECO:0000255" key="5"/>
<evidence type="ECO:0000305" key="6"/>
<reference key="1">
    <citation type="journal article" date="1992" name="Proc. Natl. Acad. Sci. U.S.A.">
        <title>Diversification of the Wnt gene family on the ancestral lineage of vertebrates.</title>
        <authorList>
            <person name="Sidow A."/>
        </authorList>
    </citation>
    <scope>NUCLEOTIDE SEQUENCE [GENOMIC DNA]</scope>
</reference>
<comment type="function">
    <text evidence="1 6">Ligand for members of the frizzled family of seven transmembrane receptors (Probable). Plays an important role in embryonic development (By similarity).</text>
</comment>
<comment type="subcellular location">
    <subcellularLocation>
        <location>Secreted</location>
        <location>Extracellular space</location>
        <location>Extracellular matrix</location>
    </subcellularLocation>
</comment>
<comment type="PTM">
    <text evidence="2 4">Palmitoleoylation is required for efficient binding to frizzled receptors. Depalmitoleoylation leads to Wnt signaling pathway inhibition.</text>
</comment>
<comment type="similarity">
    <text evidence="6">Belongs to the Wnt family.</text>
</comment>
<feature type="chain" id="PRO_0000200625" description="Protein Wnt-4">
    <location>
        <begin position="1" status="less than"/>
        <end position="119" status="greater than"/>
    </location>
</feature>
<feature type="lipid moiety-binding region" description="O-palmitoleoyl serine; by PORCN" evidence="4">
    <location>
        <position position="1"/>
    </location>
</feature>
<feature type="glycosylation site" description="N-linked (GlcNAc...) asparagine" evidence="5">
    <location>
        <position position="86"/>
    </location>
</feature>
<feature type="disulfide bond" evidence="3">
    <location>
        <begin position="69"/>
        <end position="100"/>
    </location>
</feature>
<feature type="disulfide bond" evidence="3">
    <location>
        <begin position="85"/>
        <end position="95"/>
    </location>
</feature>
<feature type="non-terminal residue">
    <location>
        <position position="1"/>
    </location>
</feature>
<feature type="non-terminal residue">
    <location>
        <position position="119"/>
    </location>
</feature>
<name>WNT4_PLEJO</name>